<evidence type="ECO:0000250" key="1"/>
<evidence type="ECO:0000256" key="2">
    <source>
        <dbReference type="SAM" id="MobiDB-lite"/>
    </source>
</evidence>
<evidence type="ECO:0000305" key="3"/>
<keyword id="KW-0539">Nucleus</keyword>
<keyword id="KW-1185">Reference proteome</keyword>
<keyword id="KW-0804">Transcription</keyword>
<keyword id="KW-0805">Transcription regulation</keyword>
<keyword id="KW-0810">Translation regulation</keyword>
<feature type="chain" id="PRO_0000406609" description="Enhancer of translation termination 1">
    <location>
        <begin position="1"/>
        <end position="411"/>
    </location>
</feature>
<feature type="region of interest" description="Disordered" evidence="2">
    <location>
        <begin position="1"/>
        <end position="45"/>
    </location>
</feature>
<feature type="compositionally biased region" description="Basic and acidic residues" evidence="2">
    <location>
        <begin position="18"/>
        <end position="39"/>
    </location>
</feature>
<organism>
    <name type="scientific">Eremothecium gossypii (strain ATCC 10895 / CBS 109.51 / FGSC 9923 / NRRL Y-1056)</name>
    <name type="common">Yeast</name>
    <name type="synonym">Ashbya gossypii</name>
    <dbReference type="NCBI Taxonomy" id="284811"/>
    <lineage>
        <taxon>Eukaryota</taxon>
        <taxon>Fungi</taxon>
        <taxon>Dikarya</taxon>
        <taxon>Ascomycota</taxon>
        <taxon>Saccharomycotina</taxon>
        <taxon>Saccharomycetes</taxon>
        <taxon>Saccharomycetales</taxon>
        <taxon>Saccharomycetaceae</taxon>
        <taxon>Eremothecium</taxon>
    </lineage>
</organism>
<sequence length="411" mass="46381">MTKRPLGLGKKNKQKRHKPDEGADGKKESTPLDQIHVEVEGGGDPEDSVVQLKALWRNYLQSEREDERVLNGIVHECDRLLRNREQEGIELGEDFHSIYALALSELAIFRTEEKGQAGRESVGEFFDAAAERVDMGLQHFPASDVLALAKAKIIFQRIPLQYVSQLSPNNSEGADVGLQQLLEEGKSSFRVVAQDPLAVSEPLEIFSDLLEIIANFGREDEIDEGLDSDAEDEPEEVELPESHPLYELRQHLPEHAEWLQQQLLALFKVLEKPNAEEEESEATKFYRKIANKLGQSYLDAAAEPSIVFTTLTYETEDPSAEDEQKAQEAQRVAQGLTERAIEFFKEAESADDPQTWVDTAEVFISLGNLQENESETQEMLYKQAEEKMVRANKATNGKYKHILDTLLDSKT</sequence>
<reference key="1">
    <citation type="journal article" date="2004" name="Science">
        <title>The Ashbya gossypii genome as a tool for mapping the ancient Saccharomyces cerevisiae genome.</title>
        <authorList>
            <person name="Dietrich F.S."/>
            <person name="Voegeli S."/>
            <person name="Brachat S."/>
            <person name="Lerch A."/>
            <person name="Gates K."/>
            <person name="Steiner S."/>
            <person name="Mohr C."/>
            <person name="Poehlmann R."/>
            <person name="Luedi P."/>
            <person name="Choi S."/>
            <person name="Wing R.A."/>
            <person name="Flavier A."/>
            <person name="Gaffney T.D."/>
            <person name="Philippsen P."/>
        </authorList>
    </citation>
    <scope>NUCLEOTIDE SEQUENCE [LARGE SCALE GENOMIC DNA]</scope>
    <source>
        <strain>ATCC 10895 / CBS 109.51 / FGSC 9923 / NRRL Y-1056</strain>
    </source>
</reference>
<reference key="2">
    <citation type="journal article" date="2013" name="G3 (Bethesda)">
        <title>Genomes of Ashbya fungi isolated from insects reveal four mating-type loci, numerous translocations, lack of transposons, and distinct gene duplications.</title>
        <authorList>
            <person name="Dietrich F.S."/>
            <person name="Voegeli S."/>
            <person name="Kuo S."/>
            <person name="Philippsen P."/>
        </authorList>
    </citation>
    <scope>GENOME REANNOTATION</scope>
    <source>
        <strain>ATCC 10895 / CBS 109.51 / FGSC 9923 / NRRL Y-1056</strain>
    </source>
</reference>
<comment type="function">
    <text evidence="1">Required for correct translation termination and probably involved in regulation of hypoxic gene expression.</text>
</comment>
<comment type="subcellular location">
    <subcellularLocation>
        <location evidence="1">Nucleus</location>
    </subcellularLocation>
</comment>
<comment type="similarity">
    <text evidence="3">Belongs to the ETT1 family.</text>
</comment>
<proteinExistence type="inferred from homology"/>
<protein>
    <recommendedName>
        <fullName>Enhancer of translation termination 1</fullName>
    </recommendedName>
</protein>
<name>ETT1_EREGS</name>
<accession>Q74ZA4</accession>
<dbReference type="EMBL" id="AE016820">
    <property type="protein sequence ID" value="AAS54789.1"/>
    <property type="molecule type" value="Genomic_DNA"/>
</dbReference>
<dbReference type="RefSeq" id="NP_986965.1">
    <property type="nucleotide sequence ID" value="NM_212027.1"/>
</dbReference>
<dbReference type="SMR" id="Q74ZA4"/>
<dbReference type="FunCoup" id="Q74ZA4">
    <property type="interactions" value="119"/>
</dbReference>
<dbReference type="STRING" id="284811.Q74ZA4"/>
<dbReference type="EnsemblFungi" id="AAS54789">
    <property type="protein sequence ID" value="AAS54789"/>
    <property type="gene ID" value="AGOS_AGR299W"/>
</dbReference>
<dbReference type="GeneID" id="4623268"/>
<dbReference type="KEGG" id="ago:AGOS_AGR299W"/>
<dbReference type="eggNOG" id="ENOG502QPHX">
    <property type="taxonomic scope" value="Eukaryota"/>
</dbReference>
<dbReference type="HOGENOM" id="CLU_050427_0_0_1"/>
<dbReference type="InParanoid" id="Q74ZA4"/>
<dbReference type="OMA" id="GIVHECD"/>
<dbReference type="OrthoDB" id="5598057at2759"/>
<dbReference type="Proteomes" id="UP000000591">
    <property type="component" value="Chromosome VII"/>
</dbReference>
<dbReference type="GO" id="GO:0005634">
    <property type="term" value="C:nucleus"/>
    <property type="evidence" value="ECO:0000318"/>
    <property type="project" value="GO_Central"/>
</dbReference>
<dbReference type="GO" id="GO:2000640">
    <property type="term" value="P:positive regulation of SREBP signaling pathway"/>
    <property type="evidence" value="ECO:0000318"/>
    <property type="project" value="GO_Central"/>
</dbReference>
<dbReference type="GO" id="GO:0006417">
    <property type="term" value="P:regulation of translation"/>
    <property type="evidence" value="ECO:0007669"/>
    <property type="project" value="UniProtKB-KW"/>
</dbReference>
<dbReference type="GO" id="GO:0006415">
    <property type="term" value="P:translational termination"/>
    <property type="evidence" value="ECO:0007669"/>
    <property type="project" value="EnsemblFungi"/>
</dbReference>
<dbReference type="InterPro" id="IPR024318">
    <property type="entry name" value="Nro1/ETT1"/>
</dbReference>
<dbReference type="PANTHER" id="PTHR28290">
    <property type="entry name" value="ENHANCER OF TRANSLATION TERMINATION 1"/>
    <property type="match status" value="1"/>
</dbReference>
<dbReference type="PANTHER" id="PTHR28290:SF1">
    <property type="entry name" value="ENHANCER OF TRANSLATION TERMINATION 1"/>
    <property type="match status" value="1"/>
</dbReference>
<dbReference type="Pfam" id="PF12753">
    <property type="entry name" value="Nro1"/>
    <property type="match status" value="1"/>
</dbReference>
<gene>
    <name type="primary">ETT1</name>
    <name type="ordered locus">AGR299W</name>
</gene>